<gene>
    <name type="ordered locus">FPV234</name>
</gene>
<organism>
    <name type="scientific">Fowlpox virus (strain NVSL)</name>
    <name type="common">FPV</name>
    <dbReference type="NCBI Taxonomy" id="928301"/>
    <lineage>
        <taxon>Viruses</taxon>
        <taxon>Varidnaviria</taxon>
        <taxon>Bamfordvirae</taxon>
        <taxon>Nucleocytoviricota</taxon>
        <taxon>Pokkesviricetes</taxon>
        <taxon>Chitovirales</taxon>
        <taxon>Poxviridae</taxon>
        <taxon>Chordopoxvirinae</taxon>
        <taxon>Avipoxvirus</taxon>
        <taxon>Fowlpox virus</taxon>
    </lineage>
</organism>
<protein>
    <recommendedName>
        <fullName>Putative ankyrin repeat protein FPV234</fullName>
    </recommendedName>
    <alternativeName>
        <fullName>BamHI-ORF12/ORF13</fullName>
    </alternativeName>
</protein>
<evidence type="ECO:0000305" key="1"/>
<organismHost>
    <name type="scientific">Vertebrata</name>
    <dbReference type="NCBI Taxonomy" id="7742"/>
</organismHost>
<keyword id="KW-0040">ANK repeat</keyword>
<keyword id="KW-1185">Reference proteome</keyword>
<keyword id="KW-0677">Repeat</keyword>
<dbReference type="EMBL" id="AF198100">
    <property type="protein sequence ID" value="AAF44578.1"/>
    <property type="molecule type" value="Genomic_DNA"/>
</dbReference>
<dbReference type="EMBL" id="D00295">
    <property type="protein sequence ID" value="BAA00209.1"/>
    <property type="status" value="ALT_FRAME"/>
    <property type="molecule type" value="Genomic_DNA"/>
</dbReference>
<dbReference type="EMBL" id="D00295">
    <property type="protein sequence ID" value="BAA00207.1"/>
    <property type="status" value="ALT_FRAME"/>
    <property type="molecule type" value="Genomic_DNA"/>
</dbReference>
<dbReference type="PIR" id="C30087">
    <property type="entry name" value="WMVZTW"/>
</dbReference>
<dbReference type="PIR" id="D30087">
    <property type="entry name" value="WMVZTH"/>
</dbReference>
<dbReference type="RefSeq" id="NP_039197.1">
    <property type="nucleotide sequence ID" value="NC_002188.1"/>
</dbReference>
<dbReference type="SMR" id="P14368"/>
<dbReference type="GeneID" id="1486806"/>
<dbReference type="KEGG" id="vg:1486806"/>
<dbReference type="Proteomes" id="UP000008597">
    <property type="component" value="Segment"/>
</dbReference>
<dbReference type="Gene3D" id="1.25.40.20">
    <property type="entry name" value="Ankyrin repeat-containing domain"/>
    <property type="match status" value="2"/>
</dbReference>
<dbReference type="InterPro" id="IPR002110">
    <property type="entry name" value="Ankyrin_rpt"/>
</dbReference>
<dbReference type="InterPro" id="IPR036770">
    <property type="entry name" value="Ankyrin_rpt-contain_sf"/>
</dbReference>
<dbReference type="InterPro" id="IPR018272">
    <property type="entry name" value="PRANC_domain"/>
</dbReference>
<dbReference type="PANTHER" id="PTHR24171">
    <property type="entry name" value="ANKYRIN REPEAT DOMAIN-CONTAINING PROTEIN 39-RELATED"/>
    <property type="match status" value="1"/>
</dbReference>
<dbReference type="Pfam" id="PF12796">
    <property type="entry name" value="Ank_2"/>
    <property type="match status" value="2"/>
</dbReference>
<dbReference type="Pfam" id="PF09372">
    <property type="entry name" value="PRANC"/>
    <property type="match status" value="1"/>
</dbReference>
<dbReference type="SMART" id="SM00248">
    <property type="entry name" value="ANK"/>
    <property type="match status" value="6"/>
</dbReference>
<dbReference type="SUPFAM" id="SSF48403">
    <property type="entry name" value="Ankyrin repeat"/>
    <property type="match status" value="1"/>
</dbReference>
<dbReference type="PROSITE" id="PS50297">
    <property type="entry name" value="ANK_REP_REGION"/>
    <property type="match status" value="1"/>
</dbReference>
<dbReference type="PROSITE" id="PS50088">
    <property type="entry name" value="ANK_REPEAT"/>
    <property type="match status" value="5"/>
</dbReference>
<proteinExistence type="predicted"/>
<comment type="sequence caution" evidence="1">
    <conflict type="frameshift">
        <sequence resource="EMBL-CDS" id="BAA00207"/>
    </conflict>
</comment>
<comment type="sequence caution" evidence="1">
    <conflict type="frameshift">
        <sequence resource="EMBL-CDS" id="BAA00209"/>
    </conflict>
</comment>
<sequence>MQVRNKDDILICEAIENYDSESLRNILENGADPNVRVPYQYSHLHNAIEKKNGSAVSLLLKHGADPNISGFFTPPLHKAIKKGCVDIARSLLEYGAIVNLEHYCLKPIHIAANRTESKIVKLLIEYGADINSEDGANGKYPIHYAMKVYDPFRLKIIKVLLDHGADINKQSVLTNTSPLYETRFITDDLLDYIISRGANINIKGRMGRNILHEIILRNGYNDFSNILVLIDHGADINALDDEGNTPFMLHTINNNAIILANYIVSLYYLSYKARISNGMEKNMKIINKCEYLSSCINIIKEEIERMKTFKIYDGNSFQDLSLFDLLSNEDNIAIVYRLSDTLLEKMNIIKTIFPNCFRIIQNILKMLTKRYEMLLEINNIMNANLVNTKWYTLPIEIRWMILTKLDDMILRNLLLQNETNNIKNCKKQ</sequence>
<reference key="1">
    <citation type="journal article" date="2000" name="J. Virol.">
        <title>The genome of fowlpox virus.</title>
        <authorList>
            <person name="Afonso C.L."/>
            <person name="Tulman E.R."/>
            <person name="Lu Z."/>
            <person name="Zsak L."/>
            <person name="Kutish G.F."/>
            <person name="Rock D.L."/>
        </authorList>
    </citation>
    <scope>NUCLEOTIDE SEQUENCE [LARGE SCALE GENOMIC DNA]</scope>
</reference>
<reference key="2">
    <citation type="journal article" date="1988" name="J. Gen. Virol.">
        <title>Sequence analysis of an 11.2 kilobase, near-terminal, BamHI fragment of fowlpox virus.</title>
        <authorList>
            <person name="Tomley F."/>
            <person name="Binns M."/>
            <person name="Campbell J."/>
            <person name="Boursnell M.E.G."/>
        </authorList>
    </citation>
    <scope>NUCLEOTIDE SEQUENCE [GENOMIC DNA] OF 65-428</scope>
    <source>
        <strain>FP-9 / Isolate HP-438</strain>
    </source>
</reference>
<accession>P14368</accession>
<accession>P14367</accession>
<accession>Q9J501</accession>
<feature type="chain" id="PRO_0000067125" description="Putative ankyrin repeat protein FPV234">
    <location>
        <begin position="1"/>
        <end position="428"/>
    </location>
</feature>
<feature type="repeat" description="ANK 1">
    <location>
        <begin position="6"/>
        <end position="35"/>
    </location>
</feature>
<feature type="repeat" description="ANK 2">
    <location>
        <begin position="39"/>
        <end position="68"/>
    </location>
</feature>
<feature type="repeat" description="ANK 3">
    <location>
        <begin position="71"/>
        <end position="100"/>
    </location>
</feature>
<feature type="repeat" description="ANK 4">
    <location>
        <begin position="103"/>
        <end position="132"/>
    </location>
</feature>
<feature type="repeat" description="ANK 5">
    <location>
        <begin position="137"/>
        <end position="169"/>
    </location>
</feature>
<feature type="repeat" description="ANK 6">
    <location>
        <begin position="174"/>
        <end position="202"/>
    </location>
</feature>
<feature type="repeat" description="ANK 7">
    <location>
        <begin position="206"/>
        <end position="238"/>
    </location>
</feature>
<feature type="repeat" description="ANK 8">
    <location>
        <begin position="242"/>
        <end position="271"/>
    </location>
</feature>
<name>V234_FOWPN</name>